<comment type="function">
    <text evidence="1">Catalyzes the acyloin condensation reaction between C atoms 2 and 3 of pyruvate and glyceraldehyde 3-phosphate to yield 1-deoxy-D-xylulose-5-phosphate (DXP).</text>
</comment>
<comment type="catalytic activity">
    <reaction evidence="1">
        <text>D-glyceraldehyde 3-phosphate + pyruvate + H(+) = 1-deoxy-D-xylulose 5-phosphate + CO2</text>
        <dbReference type="Rhea" id="RHEA:12605"/>
        <dbReference type="ChEBI" id="CHEBI:15361"/>
        <dbReference type="ChEBI" id="CHEBI:15378"/>
        <dbReference type="ChEBI" id="CHEBI:16526"/>
        <dbReference type="ChEBI" id="CHEBI:57792"/>
        <dbReference type="ChEBI" id="CHEBI:59776"/>
        <dbReference type="EC" id="2.2.1.7"/>
    </reaction>
</comment>
<comment type="cofactor">
    <cofactor evidence="1">
        <name>Mg(2+)</name>
        <dbReference type="ChEBI" id="CHEBI:18420"/>
    </cofactor>
    <text evidence="1">Binds 1 Mg(2+) ion per subunit.</text>
</comment>
<comment type="cofactor">
    <cofactor evidence="1">
        <name>thiamine diphosphate</name>
        <dbReference type="ChEBI" id="CHEBI:58937"/>
    </cofactor>
    <text evidence="1">Binds 1 thiamine pyrophosphate per subunit.</text>
</comment>
<comment type="pathway">
    <text evidence="1">Metabolic intermediate biosynthesis; 1-deoxy-D-xylulose 5-phosphate biosynthesis; 1-deoxy-D-xylulose 5-phosphate from D-glyceraldehyde 3-phosphate and pyruvate: step 1/1.</text>
</comment>
<comment type="subunit">
    <text evidence="1">Homodimer.</text>
</comment>
<comment type="similarity">
    <text evidence="1">Belongs to the transketolase family. DXPS subfamily.</text>
</comment>
<sequence>MQQESTLLDKIDYPADLRNIPLEKLPQVCKEVRNYIIDTLSGVGGHFASNLGVVELTVALHYVFDTPKDRLIWDVGHQTYPHKILTGRKDRLKTVRKFNGLSGFPKREESPYDLYNTGHAGTSISQALGEAAARDLTKGEDYSVVAIIGDASIATGMALEAMNHAGHLKKDMIVILNDNYMSISKNVGSISNYLNNIITSHFYNHWKRVFYTFLKWLPIVGPAAERFFKKVEKGFKDVLTPGGLFEDLGFGYIGPEDGHDVIRLVNMLAKVKKMKGPILLHLITQKGKGYDPAERDPIKYHGVTPFRKEDGAMDSGDTSKIAYSKIVGRMLSILTEANPKIAAITPAMIEGSGLKEYAEKYPDHLFDVGIAEQHSVAFAGAMTNGSIIPYMCIYSTFLTRAIDQLVQDVSLMNLPVRFVIDRAGCVGPDGETHQGLFDLGYLLGLPNMDVFVPSNGQDMIDSLRWMETYDKAPIAIRFPKANVDLKTLDFYKEVDLRPGTFRVLKRGTDLALLSIGSMIDEAKKATEILESAGFSVTLIDLIWLRPLGVEALNEELSNVRRFVIIDESYVDAGASGYLLNRILPENLSKYVKTFGFPPEPIHHGERKEIIQAYRLDGASIAESVADVLKKNLIKP</sequence>
<feature type="chain" id="PRO_1000019037" description="1-deoxy-D-xylulose-5-phosphate synthase">
    <location>
        <begin position="1"/>
        <end position="635"/>
    </location>
</feature>
<feature type="binding site" evidence="1">
    <location>
        <position position="77"/>
    </location>
    <ligand>
        <name>thiamine diphosphate</name>
        <dbReference type="ChEBI" id="CHEBI:58937"/>
    </ligand>
</feature>
<feature type="binding site" evidence="1">
    <location>
        <begin position="118"/>
        <end position="120"/>
    </location>
    <ligand>
        <name>thiamine diphosphate</name>
        <dbReference type="ChEBI" id="CHEBI:58937"/>
    </ligand>
</feature>
<feature type="binding site" evidence="1">
    <location>
        <position position="150"/>
    </location>
    <ligand>
        <name>Mg(2+)</name>
        <dbReference type="ChEBI" id="CHEBI:18420"/>
    </ligand>
</feature>
<feature type="binding site" evidence="1">
    <location>
        <begin position="151"/>
        <end position="152"/>
    </location>
    <ligand>
        <name>thiamine diphosphate</name>
        <dbReference type="ChEBI" id="CHEBI:58937"/>
    </ligand>
</feature>
<feature type="binding site" evidence="1">
    <location>
        <position position="179"/>
    </location>
    <ligand>
        <name>Mg(2+)</name>
        <dbReference type="ChEBI" id="CHEBI:18420"/>
    </ligand>
</feature>
<feature type="binding site" evidence="1">
    <location>
        <position position="179"/>
    </location>
    <ligand>
        <name>thiamine diphosphate</name>
        <dbReference type="ChEBI" id="CHEBI:58937"/>
    </ligand>
</feature>
<feature type="binding site" evidence="1">
    <location>
        <position position="290"/>
    </location>
    <ligand>
        <name>thiamine diphosphate</name>
        <dbReference type="ChEBI" id="CHEBI:58937"/>
    </ligand>
</feature>
<feature type="binding site" evidence="1">
    <location>
        <position position="372"/>
    </location>
    <ligand>
        <name>thiamine diphosphate</name>
        <dbReference type="ChEBI" id="CHEBI:58937"/>
    </ligand>
</feature>
<protein>
    <recommendedName>
        <fullName evidence="1">1-deoxy-D-xylulose-5-phosphate synthase</fullName>
        <ecNumber evidence="1">2.2.1.7</ecNumber>
    </recommendedName>
    <alternativeName>
        <fullName evidence="1">1-deoxyxylulose-5-phosphate synthase</fullName>
        <shortName evidence="1">DXP synthase</shortName>
        <shortName evidence="1">DXPS</shortName>
    </alternativeName>
</protein>
<proteinExistence type="inferred from homology"/>
<reference key="1">
    <citation type="journal article" date="2006" name="Proc. Natl. Acad. Sci. U.S.A.">
        <title>Genome reduction in Leptospira borgpetersenii reflects limited transmission potential.</title>
        <authorList>
            <person name="Bulach D.M."/>
            <person name="Zuerner R.L."/>
            <person name="Wilson P."/>
            <person name="Seemann T."/>
            <person name="McGrath A."/>
            <person name="Cullen P.A."/>
            <person name="Davis J."/>
            <person name="Johnson M."/>
            <person name="Kuczek E."/>
            <person name="Alt D.P."/>
            <person name="Peterson-Burch B."/>
            <person name="Coppel R.L."/>
            <person name="Rood J.I."/>
            <person name="Davies J.K."/>
            <person name="Adler B."/>
        </authorList>
    </citation>
    <scope>NUCLEOTIDE SEQUENCE [LARGE SCALE GENOMIC DNA]</scope>
    <source>
        <strain>L550</strain>
    </source>
</reference>
<gene>
    <name evidence="1" type="primary">dxs</name>
    <name type="ordered locus">LBL_0932</name>
</gene>
<dbReference type="EC" id="2.2.1.7" evidence="1"/>
<dbReference type="EMBL" id="CP000348">
    <property type="protein sequence ID" value="ABJ78473.1"/>
    <property type="molecule type" value="Genomic_DNA"/>
</dbReference>
<dbReference type="RefSeq" id="WP_011669757.1">
    <property type="nucleotide sequence ID" value="NC_008508.1"/>
</dbReference>
<dbReference type="SMR" id="Q053M2"/>
<dbReference type="KEGG" id="lbl:LBL_0932"/>
<dbReference type="HOGENOM" id="CLU_009227_1_4_12"/>
<dbReference type="UniPathway" id="UPA00064">
    <property type="reaction ID" value="UER00091"/>
</dbReference>
<dbReference type="GO" id="GO:0005829">
    <property type="term" value="C:cytosol"/>
    <property type="evidence" value="ECO:0007669"/>
    <property type="project" value="TreeGrafter"/>
</dbReference>
<dbReference type="GO" id="GO:0008661">
    <property type="term" value="F:1-deoxy-D-xylulose-5-phosphate synthase activity"/>
    <property type="evidence" value="ECO:0007669"/>
    <property type="project" value="UniProtKB-UniRule"/>
</dbReference>
<dbReference type="GO" id="GO:0000287">
    <property type="term" value="F:magnesium ion binding"/>
    <property type="evidence" value="ECO:0007669"/>
    <property type="project" value="UniProtKB-UniRule"/>
</dbReference>
<dbReference type="GO" id="GO:0030976">
    <property type="term" value="F:thiamine pyrophosphate binding"/>
    <property type="evidence" value="ECO:0007669"/>
    <property type="project" value="UniProtKB-UniRule"/>
</dbReference>
<dbReference type="GO" id="GO:0052865">
    <property type="term" value="P:1-deoxy-D-xylulose 5-phosphate biosynthetic process"/>
    <property type="evidence" value="ECO:0007669"/>
    <property type="project" value="UniProtKB-UniPathway"/>
</dbReference>
<dbReference type="GO" id="GO:0019288">
    <property type="term" value="P:isopentenyl diphosphate biosynthetic process, methylerythritol 4-phosphate pathway"/>
    <property type="evidence" value="ECO:0007669"/>
    <property type="project" value="TreeGrafter"/>
</dbReference>
<dbReference type="GO" id="GO:0016114">
    <property type="term" value="P:terpenoid biosynthetic process"/>
    <property type="evidence" value="ECO:0007669"/>
    <property type="project" value="UniProtKB-UniRule"/>
</dbReference>
<dbReference type="GO" id="GO:0009228">
    <property type="term" value="P:thiamine biosynthetic process"/>
    <property type="evidence" value="ECO:0007669"/>
    <property type="project" value="UniProtKB-UniRule"/>
</dbReference>
<dbReference type="CDD" id="cd02007">
    <property type="entry name" value="TPP_DXS"/>
    <property type="match status" value="1"/>
</dbReference>
<dbReference type="CDD" id="cd07033">
    <property type="entry name" value="TPP_PYR_DXS_TK_like"/>
    <property type="match status" value="1"/>
</dbReference>
<dbReference type="Gene3D" id="3.40.50.920">
    <property type="match status" value="1"/>
</dbReference>
<dbReference type="Gene3D" id="3.40.50.970">
    <property type="match status" value="2"/>
</dbReference>
<dbReference type="HAMAP" id="MF_00315">
    <property type="entry name" value="DXP_synth"/>
    <property type="match status" value="1"/>
</dbReference>
<dbReference type="InterPro" id="IPR005477">
    <property type="entry name" value="Dxylulose-5-P_synthase"/>
</dbReference>
<dbReference type="InterPro" id="IPR029061">
    <property type="entry name" value="THDP-binding"/>
</dbReference>
<dbReference type="InterPro" id="IPR009014">
    <property type="entry name" value="Transketo_C/PFOR_II"/>
</dbReference>
<dbReference type="InterPro" id="IPR005475">
    <property type="entry name" value="Transketolase-like_Pyr-bd"/>
</dbReference>
<dbReference type="InterPro" id="IPR033248">
    <property type="entry name" value="Transketolase_C"/>
</dbReference>
<dbReference type="InterPro" id="IPR049557">
    <property type="entry name" value="Transketolase_CS"/>
</dbReference>
<dbReference type="NCBIfam" id="TIGR00204">
    <property type="entry name" value="dxs"/>
    <property type="match status" value="1"/>
</dbReference>
<dbReference type="NCBIfam" id="NF003933">
    <property type="entry name" value="PRK05444.2-2"/>
    <property type="match status" value="1"/>
</dbReference>
<dbReference type="PANTHER" id="PTHR43322">
    <property type="entry name" value="1-D-DEOXYXYLULOSE 5-PHOSPHATE SYNTHASE-RELATED"/>
    <property type="match status" value="1"/>
</dbReference>
<dbReference type="PANTHER" id="PTHR43322:SF5">
    <property type="entry name" value="1-DEOXY-D-XYLULOSE-5-PHOSPHATE SYNTHASE, CHLOROPLASTIC"/>
    <property type="match status" value="1"/>
</dbReference>
<dbReference type="Pfam" id="PF13292">
    <property type="entry name" value="DXP_synthase_N"/>
    <property type="match status" value="1"/>
</dbReference>
<dbReference type="Pfam" id="PF02779">
    <property type="entry name" value="Transket_pyr"/>
    <property type="match status" value="1"/>
</dbReference>
<dbReference type="Pfam" id="PF02780">
    <property type="entry name" value="Transketolase_C"/>
    <property type="match status" value="1"/>
</dbReference>
<dbReference type="SMART" id="SM00861">
    <property type="entry name" value="Transket_pyr"/>
    <property type="match status" value="1"/>
</dbReference>
<dbReference type="SUPFAM" id="SSF52518">
    <property type="entry name" value="Thiamin diphosphate-binding fold (THDP-binding)"/>
    <property type="match status" value="2"/>
</dbReference>
<dbReference type="SUPFAM" id="SSF52922">
    <property type="entry name" value="TK C-terminal domain-like"/>
    <property type="match status" value="1"/>
</dbReference>
<dbReference type="PROSITE" id="PS00801">
    <property type="entry name" value="TRANSKETOLASE_1"/>
    <property type="match status" value="1"/>
</dbReference>
<organism>
    <name type="scientific">Leptospira borgpetersenii serovar Hardjo-bovis (strain L550)</name>
    <dbReference type="NCBI Taxonomy" id="355276"/>
    <lineage>
        <taxon>Bacteria</taxon>
        <taxon>Pseudomonadati</taxon>
        <taxon>Spirochaetota</taxon>
        <taxon>Spirochaetia</taxon>
        <taxon>Leptospirales</taxon>
        <taxon>Leptospiraceae</taxon>
        <taxon>Leptospira</taxon>
    </lineage>
</organism>
<keyword id="KW-0414">Isoprene biosynthesis</keyword>
<keyword id="KW-0460">Magnesium</keyword>
<keyword id="KW-0479">Metal-binding</keyword>
<keyword id="KW-0784">Thiamine biosynthesis</keyword>
<keyword id="KW-0786">Thiamine pyrophosphate</keyword>
<keyword id="KW-0808">Transferase</keyword>
<evidence type="ECO:0000255" key="1">
    <source>
        <dbReference type="HAMAP-Rule" id="MF_00315"/>
    </source>
</evidence>
<accession>Q053M2</accession>
<name>DXS_LEPBL</name>